<protein>
    <recommendedName>
        <fullName>General transcription factor IIH subunit 2</fullName>
    </recommendedName>
    <alternativeName>
        <fullName>TFIIH basal transcription factor complex subunit 2</fullName>
    </alternativeName>
</protein>
<comment type="function">
    <text evidence="2">Component of the general transcription and DNA repair factor IIH (TFIIH) core complex, which is involved in general and transcription-coupled nucleotide excision repair (NER) of damaged DNA and, when complexed to CAK, in RNA transcription by RNA polymerase II. In NER, TFIIH acts by opening DNA around the lesion to allow the excision of the damaged oligonucleotide and its replacement by a new DNA fragment. In transcription, TFIIH has an essential role in transcription initiation. When the pre-initiation complex (PIC) has been established, TFIIH is required for promoter opening and promoter escape. Phosphorylation of the C-terminal tail (CTD) of the largest subunit of RNA polymerase II by the kinase module CAK controls the initiation of transcription.</text>
</comment>
<comment type="subunit">
    <text evidence="2">Component of the 7-subunit TFIIH core complex composed of xpb-1, xpd-1, gtf-2H1, gtf-2H2C, gtf-2H3, Y73F8A.24 and gtf-2H5, which is active in NER. The core complex associates with the 3-subunit CDK-activating kinase (CAK) module composed of cyh-1, cdk-7 and mnat-1 to form the 10-subunit holoenzyme (holo-TFIIH) active in transcription.</text>
</comment>
<comment type="subcellular location">
    <subcellularLocation>
        <location evidence="1">Nucleus</location>
    </subcellularLocation>
</comment>
<comment type="similarity">
    <text evidence="4">Belongs to the GTF2H2 family.</text>
</comment>
<proteinExistence type="inferred from homology"/>
<evidence type="ECO:0000250" key="1"/>
<evidence type="ECO:0000250" key="2">
    <source>
        <dbReference type="UniProtKB" id="Q13888"/>
    </source>
</evidence>
<evidence type="ECO:0000255" key="3">
    <source>
        <dbReference type="PROSITE-ProRule" id="PRU00219"/>
    </source>
</evidence>
<evidence type="ECO:0000305" key="4"/>
<evidence type="ECO:0000312" key="5">
    <source>
        <dbReference type="WormBase" id="T16H12.4"/>
    </source>
</evidence>
<feature type="chain" id="PRO_0000119250" description="General transcription factor IIH subunit 2">
    <location>
        <begin position="1"/>
        <end position="376"/>
    </location>
</feature>
<feature type="domain" description="VWFA" evidence="3">
    <location>
        <begin position="64"/>
        <end position="206"/>
    </location>
</feature>
<feature type="zinc finger region" description="C4-type">
    <location>
        <begin position="286"/>
        <end position="303"/>
    </location>
</feature>
<reference key="1">
    <citation type="journal article" date="1998" name="Science">
        <title>Genome sequence of the nematode C. elegans: a platform for investigating biology.</title>
        <authorList>
            <consortium name="The C. elegans sequencing consortium"/>
        </authorList>
    </citation>
    <scope>NUCLEOTIDE SEQUENCE [LARGE SCALE GENOMIC DNA]</scope>
    <source>
        <strain>Bristol N2</strain>
    </source>
</reference>
<sequence length="376" mass="41611">MDDDEQKGYTWEAGYAEGLNINDVLVEDEGGSIEKSIAKYVADSKRKARLTKRPERIRLGIMRHVMIVIDCSRFMTSKAMPPSRFVVVMKALQTFLDRFFEQNPIAQIGLITCKDRKADRLTMMTGNIRVLKESLNTLTEAFCGGDFSLQNALQLACANLKGMPGHVSREVVLVISALSTIDPGNIYSTIETMKRMNIRCSAIGLSAEMFVCKEMAKATKGEYSVALDPDHLQLLFSKHTLPPSSAKSSECNAIHVGFPHHELITTRSFCVCHPDTKPISSRGFICTQCGARHCSIPAECPVCKLTLVAAPQLARAFRHLQPLSAFEQIEVTRGFCYACETRLSGEGFRCGSCQLVFCLDCDTLLHESLHVCPGCN</sequence>
<dbReference type="EMBL" id="BX284603">
    <property type="protein sequence ID" value="CAA83139.3"/>
    <property type="molecule type" value="Genomic_DNA"/>
</dbReference>
<dbReference type="PIR" id="S42385">
    <property type="entry name" value="S42385"/>
</dbReference>
<dbReference type="RefSeq" id="NP_499239.1">
    <property type="nucleotide sequence ID" value="NM_066838.6"/>
</dbReference>
<dbReference type="SMR" id="P34567"/>
<dbReference type="BioGRID" id="41615">
    <property type="interactions" value="1"/>
</dbReference>
<dbReference type="FunCoup" id="P34567">
    <property type="interactions" value="1831"/>
</dbReference>
<dbReference type="IntAct" id="P34567">
    <property type="interactions" value="1"/>
</dbReference>
<dbReference type="STRING" id="6239.T16H12.4.2"/>
<dbReference type="PaxDb" id="6239-T16H12.4.1"/>
<dbReference type="PeptideAtlas" id="P34567"/>
<dbReference type="EnsemblMetazoa" id="T16H12.4.1">
    <property type="protein sequence ID" value="T16H12.4.1"/>
    <property type="gene ID" value="WBGene00011814"/>
</dbReference>
<dbReference type="GeneID" id="176421"/>
<dbReference type="KEGG" id="cel:CELE_T16H12.4"/>
<dbReference type="UCSC" id="T16H12.4.1">
    <property type="organism name" value="c. elegans"/>
</dbReference>
<dbReference type="AGR" id="WB:WBGene00011814"/>
<dbReference type="CTD" id="176421"/>
<dbReference type="WormBase" id="T16H12.4">
    <property type="protein sequence ID" value="CE29053"/>
    <property type="gene ID" value="WBGene00011814"/>
    <property type="gene designation" value="gtf-2H2C"/>
</dbReference>
<dbReference type="eggNOG" id="KOG2807">
    <property type="taxonomic scope" value="Eukaryota"/>
</dbReference>
<dbReference type="GeneTree" id="ENSGT00490000043395"/>
<dbReference type="HOGENOM" id="CLU_028556_1_0_1"/>
<dbReference type="InParanoid" id="P34567"/>
<dbReference type="OMA" id="INWVEVP"/>
<dbReference type="OrthoDB" id="284275at2759"/>
<dbReference type="PhylomeDB" id="P34567"/>
<dbReference type="Reactome" id="R-CEL-112382">
    <property type="pathway name" value="Formation of RNA Pol II elongation complex"/>
</dbReference>
<dbReference type="Reactome" id="R-CEL-113418">
    <property type="pathway name" value="Formation of the Early Elongation Complex"/>
</dbReference>
<dbReference type="Reactome" id="R-CEL-5696395">
    <property type="pathway name" value="Formation of Incision Complex in GG-NER"/>
</dbReference>
<dbReference type="Reactome" id="R-CEL-5696400">
    <property type="pathway name" value="Dual Incision in GG-NER"/>
</dbReference>
<dbReference type="Reactome" id="R-CEL-674695">
    <property type="pathway name" value="RNA Polymerase II Pre-transcription Events"/>
</dbReference>
<dbReference type="Reactome" id="R-CEL-6781823">
    <property type="pathway name" value="Formation of TC-NER Pre-Incision Complex"/>
</dbReference>
<dbReference type="Reactome" id="R-CEL-6782135">
    <property type="pathway name" value="Dual incision in TC-NER"/>
</dbReference>
<dbReference type="Reactome" id="R-CEL-6782210">
    <property type="pathway name" value="Gap-filling DNA repair synthesis and ligation in TC-NER"/>
</dbReference>
<dbReference type="Reactome" id="R-CEL-6796648">
    <property type="pathway name" value="TP53 Regulates Transcription of DNA Repair Genes"/>
</dbReference>
<dbReference type="Reactome" id="R-CEL-72086">
    <property type="pathway name" value="mRNA Capping"/>
</dbReference>
<dbReference type="Reactome" id="R-CEL-73772">
    <property type="pathway name" value="RNA Polymerase I Promoter Escape"/>
</dbReference>
<dbReference type="Reactome" id="R-CEL-73776">
    <property type="pathway name" value="RNA Polymerase II Promoter Escape"/>
</dbReference>
<dbReference type="Reactome" id="R-CEL-73779">
    <property type="pathway name" value="RNA Polymerase II Transcription Pre-Initiation And Promoter Opening"/>
</dbReference>
<dbReference type="Reactome" id="R-CEL-75953">
    <property type="pathway name" value="RNA Polymerase II Transcription Initiation"/>
</dbReference>
<dbReference type="Reactome" id="R-CEL-75955">
    <property type="pathway name" value="RNA Polymerase II Transcription Elongation"/>
</dbReference>
<dbReference type="Reactome" id="R-CEL-76042">
    <property type="pathway name" value="RNA Polymerase II Transcription Initiation And Promoter Clearance"/>
</dbReference>
<dbReference type="Reactome" id="R-CEL-77075">
    <property type="pathway name" value="RNA Pol II CTD phosphorylation and interaction with CE"/>
</dbReference>
<dbReference type="PRO" id="PR:P34567"/>
<dbReference type="Proteomes" id="UP000001940">
    <property type="component" value="Chromosome III"/>
</dbReference>
<dbReference type="Bgee" id="WBGene00011814">
    <property type="expression patterns" value="Expressed in germ line (C elegans) and 4 other cell types or tissues"/>
</dbReference>
<dbReference type="GO" id="GO:0000439">
    <property type="term" value="C:transcription factor TFIIH core complex"/>
    <property type="evidence" value="ECO:0007669"/>
    <property type="project" value="InterPro"/>
</dbReference>
<dbReference type="GO" id="GO:0005675">
    <property type="term" value="C:transcription factor TFIIH holo complex"/>
    <property type="evidence" value="ECO:0000318"/>
    <property type="project" value="GO_Central"/>
</dbReference>
<dbReference type="GO" id="GO:0008270">
    <property type="term" value="F:zinc ion binding"/>
    <property type="evidence" value="ECO:0007669"/>
    <property type="project" value="UniProtKB-KW"/>
</dbReference>
<dbReference type="GO" id="GO:0006351">
    <property type="term" value="P:DNA-templated transcription"/>
    <property type="evidence" value="ECO:0007669"/>
    <property type="project" value="InterPro"/>
</dbReference>
<dbReference type="GO" id="GO:0006289">
    <property type="term" value="P:nucleotide-excision repair"/>
    <property type="evidence" value="ECO:0000318"/>
    <property type="project" value="GO_Central"/>
</dbReference>
<dbReference type="GO" id="GO:0006357">
    <property type="term" value="P:regulation of transcription by RNA polymerase II"/>
    <property type="evidence" value="ECO:0000318"/>
    <property type="project" value="GO_Central"/>
</dbReference>
<dbReference type="CDD" id="cd01453">
    <property type="entry name" value="vWA_transcription_factor_IIH_type"/>
    <property type="match status" value="1"/>
</dbReference>
<dbReference type="FunFam" id="3.30.40.10:FF:001127">
    <property type="entry name" value="General transcription factor IIH subunit"/>
    <property type="match status" value="1"/>
</dbReference>
<dbReference type="FunFam" id="3.40.50.410:FF:000015">
    <property type="entry name" value="General transcription factor IIH subunit 2"/>
    <property type="match status" value="1"/>
</dbReference>
<dbReference type="Gene3D" id="3.40.50.410">
    <property type="entry name" value="von Willebrand factor, type A domain"/>
    <property type="match status" value="1"/>
</dbReference>
<dbReference type="Gene3D" id="3.30.40.10">
    <property type="entry name" value="Zinc/RING finger domain, C3HC4 (zinc finger)"/>
    <property type="match status" value="1"/>
</dbReference>
<dbReference type="InterPro" id="IPR046349">
    <property type="entry name" value="C1-like_sf"/>
</dbReference>
<dbReference type="InterPro" id="IPR007198">
    <property type="entry name" value="Ssl1-like"/>
</dbReference>
<dbReference type="InterPro" id="IPR004595">
    <property type="entry name" value="TFIIH_C1-like_dom"/>
</dbReference>
<dbReference type="InterPro" id="IPR012170">
    <property type="entry name" value="TFIIH_SSL1/p44"/>
</dbReference>
<dbReference type="InterPro" id="IPR002035">
    <property type="entry name" value="VWF_A"/>
</dbReference>
<dbReference type="InterPro" id="IPR036465">
    <property type="entry name" value="vWFA_dom_sf"/>
</dbReference>
<dbReference type="InterPro" id="IPR013087">
    <property type="entry name" value="Znf_C2H2_type"/>
</dbReference>
<dbReference type="InterPro" id="IPR013083">
    <property type="entry name" value="Znf_RING/FYVE/PHD"/>
</dbReference>
<dbReference type="InterPro" id="IPR000433">
    <property type="entry name" value="Znf_ZZ"/>
</dbReference>
<dbReference type="NCBIfam" id="TIGR00622">
    <property type="entry name" value="ssl1"/>
    <property type="match status" value="1"/>
</dbReference>
<dbReference type="PANTHER" id="PTHR12695">
    <property type="entry name" value="GENERAL TRANSCRIPTION FACTOR IIH SUBUNIT 2"/>
    <property type="match status" value="1"/>
</dbReference>
<dbReference type="PANTHER" id="PTHR12695:SF2">
    <property type="entry name" value="GENERAL TRANSCRIPTION FACTOR IIH SUBUNIT 2-RELATED"/>
    <property type="match status" value="1"/>
</dbReference>
<dbReference type="Pfam" id="PF07975">
    <property type="entry name" value="C1_4"/>
    <property type="match status" value="1"/>
</dbReference>
<dbReference type="Pfam" id="PF04056">
    <property type="entry name" value="Ssl1"/>
    <property type="match status" value="1"/>
</dbReference>
<dbReference type="PIRSF" id="PIRSF015919">
    <property type="entry name" value="TFIIH_SSL1"/>
    <property type="match status" value="1"/>
</dbReference>
<dbReference type="SMART" id="SM01047">
    <property type="entry name" value="C1_4"/>
    <property type="match status" value="1"/>
</dbReference>
<dbReference type="SMART" id="SM00327">
    <property type="entry name" value="VWA"/>
    <property type="match status" value="1"/>
</dbReference>
<dbReference type="SUPFAM" id="SSF57889">
    <property type="entry name" value="Cysteine-rich domain"/>
    <property type="match status" value="1"/>
</dbReference>
<dbReference type="SUPFAM" id="SSF53300">
    <property type="entry name" value="vWA-like"/>
    <property type="match status" value="1"/>
</dbReference>
<dbReference type="PROSITE" id="PS50234">
    <property type="entry name" value="VWFA"/>
    <property type="match status" value="1"/>
</dbReference>
<dbReference type="PROSITE" id="PS01357">
    <property type="entry name" value="ZF_ZZ_1"/>
    <property type="match status" value="1"/>
</dbReference>
<gene>
    <name evidence="5" type="primary">gtf-2H2C</name>
    <name evidence="5" type="ORF">T16H12.4</name>
</gene>
<keyword id="KW-0227">DNA damage</keyword>
<keyword id="KW-0234">DNA repair</keyword>
<keyword id="KW-0479">Metal-binding</keyword>
<keyword id="KW-0539">Nucleus</keyword>
<keyword id="KW-1185">Reference proteome</keyword>
<keyword id="KW-0804">Transcription</keyword>
<keyword id="KW-0805">Transcription regulation</keyword>
<keyword id="KW-0862">Zinc</keyword>
<keyword id="KW-0863">Zinc-finger</keyword>
<organism>
    <name type="scientific">Caenorhabditis elegans</name>
    <dbReference type="NCBI Taxonomy" id="6239"/>
    <lineage>
        <taxon>Eukaryota</taxon>
        <taxon>Metazoa</taxon>
        <taxon>Ecdysozoa</taxon>
        <taxon>Nematoda</taxon>
        <taxon>Chromadorea</taxon>
        <taxon>Rhabditida</taxon>
        <taxon>Rhabditina</taxon>
        <taxon>Rhabditomorpha</taxon>
        <taxon>Rhabditoidea</taxon>
        <taxon>Rhabditidae</taxon>
        <taxon>Peloderinae</taxon>
        <taxon>Caenorhabditis</taxon>
    </lineage>
</organism>
<accession>P34567</accession>
<name>TF2H2_CAEEL</name>